<accession>Q317Y7</accession>
<gene>
    <name evidence="1" type="primary">tig</name>
    <name type="ordered locus">PMT9312_1747</name>
</gene>
<feature type="chain" id="PRO_0000256588" description="Trigger factor">
    <location>
        <begin position="1"/>
        <end position="481"/>
    </location>
</feature>
<feature type="domain" description="PPIase FKBP-type" evidence="1">
    <location>
        <begin position="174"/>
        <end position="261"/>
    </location>
</feature>
<feature type="region of interest" description="Disordered" evidence="2">
    <location>
        <begin position="435"/>
        <end position="481"/>
    </location>
</feature>
<feature type="compositionally biased region" description="Low complexity" evidence="2">
    <location>
        <begin position="456"/>
        <end position="474"/>
    </location>
</feature>
<protein>
    <recommendedName>
        <fullName evidence="1">Trigger factor</fullName>
        <shortName evidence="1">TF</shortName>
        <ecNumber evidence="1">5.2.1.8</ecNumber>
    </recommendedName>
    <alternativeName>
        <fullName evidence="1">PPIase</fullName>
    </alternativeName>
</protein>
<organism>
    <name type="scientific">Prochlorococcus marinus (strain MIT 9312)</name>
    <dbReference type="NCBI Taxonomy" id="74546"/>
    <lineage>
        <taxon>Bacteria</taxon>
        <taxon>Bacillati</taxon>
        <taxon>Cyanobacteriota</taxon>
        <taxon>Cyanophyceae</taxon>
        <taxon>Synechococcales</taxon>
        <taxon>Prochlorococcaceae</taxon>
        <taxon>Prochlorococcus</taxon>
    </lineage>
</organism>
<comment type="function">
    <text evidence="1">Involved in protein export. Acts as a chaperone by maintaining the newly synthesized protein in an open conformation. Functions as a peptidyl-prolyl cis-trans isomerase.</text>
</comment>
<comment type="catalytic activity">
    <reaction evidence="1">
        <text>[protein]-peptidylproline (omega=180) = [protein]-peptidylproline (omega=0)</text>
        <dbReference type="Rhea" id="RHEA:16237"/>
        <dbReference type="Rhea" id="RHEA-COMP:10747"/>
        <dbReference type="Rhea" id="RHEA-COMP:10748"/>
        <dbReference type="ChEBI" id="CHEBI:83833"/>
        <dbReference type="ChEBI" id="CHEBI:83834"/>
        <dbReference type="EC" id="5.2.1.8"/>
    </reaction>
</comment>
<comment type="subcellular location">
    <subcellularLocation>
        <location>Cytoplasm</location>
    </subcellularLocation>
    <text evidence="1">About half TF is bound to the ribosome near the polypeptide exit tunnel while the other half is free in the cytoplasm.</text>
</comment>
<comment type="domain">
    <text evidence="1">Consists of 3 domains; the N-terminus binds the ribosome, the middle domain has PPIase activity, while the C-terminus has intrinsic chaperone activity on its own.</text>
</comment>
<comment type="similarity">
    <text evidence="1">Belongs to the FKBP-type PPIase family. Tig subfamily.</text>
</comment>
<proteinExistence type="inferred from homology"/>
<sequence>MAKEALIVKTTPLPQSRISFELEIPSETCKTCVNETISTISRSAKIPGFRLGKIPKQVLIQRIGITQLHASALEKIIDKSWQEALKIKSIEPLSEPELVDGFESLLAKFSPEKSLKFTLQTDVAPELKLKKSKGLSVEISKTKFDPKSVDEALEKSRSQFANIIPVTNRAAKLGDIAVVSFKGKYKDSGKEIDGGTSESMDLELEKNKMIPGFVEGIVKMKIGDTKTLNLKFPEDYSHEDSRGKEAIFEVSLKDLKEKELPELNDDFAKQSGNKESLKELKKDIEKQLKENFEKTQKDIKIEALLDALTNELVAEIPKSMIDIEVRNNIEQTAQRFAQQGLDVKSTFTPELVKSLSESTRPQAEKNVQRNLALKALAEKENITVEKDEIDLKMKDYEDAISQSSKQIDIKKLTEVISKDLLKEKLIIWLEENSEVKEKTTKASQASKTTKAKKTTTKTTKATKTATKTTKATKTQNKKEKK</sequence>
<keyword id="KW-0131">Cell cycle</keyword>
<keyword id="KW-0132">Cell division</keyword>
<keyword id="KW-0143">Chaperone</keyword>
<keyword id="KW-0963">Cytoplasm</keyword>
<keyword id="KW-0413">Isomerase</keyword>
<keyword id="KW-0697">Rotamase</keyword>
<evidence type="ECO:0000255" key="1">
    <source>
        <dbReference type="HAMAP-Rule" id="MF_00303"/>
    </source>
</evidence>
<evidence type="ECO:0000256" key="2">
    <source>
        <dbReference type="SAM" id="MobiDB-lite"/>
    </source>
</evidence>
<reference key="1">
    <citation type="journal article" date="2006" name="Science">
        <title>Genomic islands and the ecology and evolution of Prochlorococcus.</title>
        <authorList>
            <person name="Coleman M.L."/>
            <person name="Sullivan M.B."/>
            <person name="Martiny A.C."/>
            <person name="Steglich C."/>
            <person name="Barry K."/>
            <person name="Delong E.F."/>
            <person name="Chisholm S.W."/>
        </authorList>
    </citation>
    <scope>NUCLEOTIDE SEQUENCE [LARGE SCALE GENOMIC DNA]</scope>
    <source>
        <strain>MIT 9312</strain>
    </source>
</reference>
<dbReference type="EC" id="5.2.1.8" evidence="1"/>
<dbReference type="EMBL" id="CP000111">
    <property type="protein sequence ID" value="ABB50808.1"/>
    <property type="molecule type" value="Genomic_DNA"/>
</dbReference>
<dbReference type="RefSeq" id="WP_011377289.1">
    <property type="nucleotide sequence ID" value="NC_007577.1"/>
</dbReference>
<dbReference type="SMR" id="Q317Y7"/>
<dbReference type="STRING" id="74546.PMT9312_1747"/>
<dbReference type="KEGG" id="pmi:PMT9312_1747"/>
<dbReference type="eggNOG" id="COG0544">
    <property type="taxonomic scope" value="Bacteria"/>
</dbReference>
<dbReference type="HOGENOM" id="CLU_033058_3_1_3"/>
<dbReference type="OrthoDB" id="9767721at2"/>
<dbReference type="Proteomes" id="UP000002715">
    <property type="component" value="Chromosome"/>
</dbReference>
<dbReference type="GO" id="GO:0005737">
    <property type="term" value="C:cytoplasm"/>
    <property type="evidence" value="ECO:0007669"/>
    <property type="project" value="UniProtKB-SubCell"/>
</dbReference>
<dbReference type="GO" id="GO:0003755">
    <property type="term" value="F:peptidyl-prolyl cis-trans isomerase activity"/>
    <property type="evidence" value="ECO:0007669"/>
    <property type="project" value="UniProtKB-UniRule"/>
</dbReference>
<dbReference type="GO" id="GO:0044183">
    <property type="term" value="F:protein folding chaperone"/>
    <property type="evidence" value="ECO:0007669"/>
    <property type="project" value="TreeGrafter"/>
</dbReference>
<dbReference type="GO" id="GO:0043022">
    <property type="term" value="F:ribosome binding"/>
    <property type="evidence" value="ECO:0007669"/>
    <property type="project" value="TreeGrafter"/>
</dbReference>
<dbReference type="GO" id="GO:0051083">
    <property type="term" value="P:'de novo' cotranslational protein folding"/>
    <property type="evidence" value="ECO:0007669"/>
    <property type="project" value="TreeGrafter"/>
</dbReference>
<dbReference type="GO" id="GO:0051301">
    <property type="term" value="P:cell division"/>
    <property type="evidence" value="ECO:0007669"/>
    <property type="project" value="UniProtKB-KW"/>
</dbReference>
<dbReference type="GO" id="GO:0061077">
    <property type="term" value="P:chaperone-mediated protein folding"/>
    <property type="evidence" value="ECO:0007669"/>
    <property type="project" value="TreeGrafter"/>
</dbReference>
<dbReference type="GO" id="GO:0015031">
    <property type="term" value="P:protein transport"/>
    <property type="evidence" value="ECO:0007669"/>
    <property type="project" value="UniProtKB-UniRule"/>
</dbReference>
<dbReference type="GO" id="GO:0043335">
    <property type="term" value="P:protein unfolding"/>
    <property type="evidence" value="ECO:0007669"/>
    <property type="project" value="TreeGrafter"/>
</dbReference>
<dbReference type="FunFam" id="3.10.50.40:FF:000001">
    <property type="entry name" value="Trigger factor"/>
    <property type="match status" value="1"/>
</dbReference>
<dbReference type="FunFam" id="3.30.70.1050:FF:000004">
    <property type="entry name" value="Trigger factor"/>
    <property type="match status" value="1"/>
</dbReference>
<dbReference type="Gene3D" id="3.10.50.40">
    <property type="match status" value="1"/>
</dbReference>
<dbReference type="Gene3D" id="3.30.70.1050">
    <property type="entry name" value="Trigger factor ribosome-binding domain"/>
    <property type="match status" value="1"/>
</dbReference>
<dbReference type="Gene3D" id="1.10.3120.10">
    <property type="entry name" value="Trigger factor, C-terminal domain"/>
    <property type="match status" value="1"/>
</dbReference>
<dbReference type="HAMAP" id="MF_00303">
    <property type="entry name" value="Trigger_factor_Tig"/>
    <property type="match status" value="1"/>
</dbReference>
<dbReference type="InterPro" id="IPR046357">
    <property type="entry name" value="PPIase_dom_sf"/>
</dbReference>
<dbReference type="InterPro" id="IPR001179">
    <property type="entry name" value="PPIase_FKBP_dom"/>
</dbReference>
<dbReference type="InterPro" id="IPR005215">
    <property type="entry name" value="Trig_fac"/>
</dbReference>
<dbReference type="InterPro" id="IPR008880">
    <property type="entry name" value="Trigger_fac_C"/>
</dbReference>
<dbReference type="InterPro" id="IPR037041">
    <property type="entry name" value="Trigger_fac_C_sf"/>
</dbReference>
<dbReference type="InterPro" id="IPR008881">
    <property type="entry name" value="Trigger_fac_ribosome-bd_bac"/>
</dbReference>
<dbReference type="InterPro" id="IPR036611">
    <property type="entry name" value="Trigger_fac_ribosome-bd_sf"/>
</dbReference>
<dbReference type="InterPro" id="IPR027304">
    <property type="entry name" value="Trigger_fact/SurA_dom_sf"/>
</dbReference>
<dbReference type="NCBIfam" id="TIGR00115">
    <property type="entry name" value="tig"/>
    <property type="match status" value="1"/>
</dbReference>
<dbReference type="PANTHER" id="PTHR30560">
    <property type="entry name" value="TRIGGER FACTOR CHAPERONE AND PEPTIDYL-PROLYL CIS/TRANS ISOMERASE"/>
    <property type="match status" value="1"/>
</dbReference>
<dbReference type="PANTHER" id="PTHR30560:SF3">
    <property type="entry name" value="TRIGGER FACTOR-LIKE PROTEIN TIG, CHLOROPLASTIC"/>
    <property type="match status" value="1"/>
</dbReference>
<dbReference type="Pfam" id="PF00254">
    <property type="entry name" value="FKBP_C"/>
    <property type="match status" value="1"/>
</dbReference>
<dbReference type="Pfam" id="PF05698">
    <property type="entry name" value="Trigger_C"/>
    <property type="match status" value="1"/>
</dbReference>
<dbReference type="Pfam" id="PF05697">
    <property type="entry name" value="Trigger_N"/>
    <property type="match status" value="1"/>
</dbReference>
<dbReference type="PIRSF" id="PIRSF003095">
    <property type="entry name" value="Trigger_factor"/>
    <property type="match status" value="1"/>
</dbReference>
<dbReference type="SUPFAM" id="SSF54534">
    <property type="entry name" value="FKBP-like"/>
    <property type="match status" value="1"/>
</dbReference>
<dbReference type="SUPFAM" id="SSF109998">
    <property type="entry name" value="Triger factor/SurA peptide-binding domain-like"/>
    <property type="match status" value="1"/>
</dbReference>
<dbReference type="SUPFAM" id="SSF102735">
    <property type="entry name" value="Trigger factor ribosome-binding domain"/>
    <property type="match status" value="1"/>
</dbReference>
<dbReference type="PROSITE" id="PS50059">
    <property type="entry name" value="FKBP_PPIASE"/>
    <property type="match status" value="1"/>
</dbReference>
<name>TIG_PROM9</name>